<name>ZAPB_YERPA</name>
<reference key="1">
    <citation type="journal article" date="2006" name="J. Bacteriol.">
        <title>Complete genome sequence of Yersinia pestis strains Antiqua and Nepal516: evidence of gene reduction in an emerging pathogen.</title>
        <authorList>
            <person name="Chain P.S.G."/>
            <person name="Hu P."/>
            <person name="Malfatti S.A."/>
            <person name="Radnedge L."/>
            <person name="Larimer F."/>
            <person name="Vergez L.M."/>
            <person name="Worsham P."/>
            <person name="Chu M.C."/>
            <person name="Andersen G.L."/>
        </authorList>
    </citation>
    <scope>NUCLEOTIDE SEQUENCE [LARGE SCALE GENOMIC DNA]</scope>
    <source>
        <strain>Antiqua</strain>
    </source>
</reference>
<gene>
    <name evidence="1" type="primary">zapB</name>
    <name type="ordered locus">YPA_3449</name>
</gene>
<keyword id="KW-0131">Cell cycle</keyword>
<keyword id="KW-0132">Cell division</keyword>
<keyword id="KW-0175">Coiled coil</keyword>
<keyword id="KW-0963">Cytoplasm</keyword>
<keyword id="KW-0717">Septation</keyword>
<organism>
    <name type="scientific">Yersinia pestis bv. Antiqua (strain Antiqua)</name>
    <dbReference type="NCBI Taxonomy" id="360102"/>
    <lineage>
        <taxon>Bacteria</taxon>
        <taxon>Pseudomonadati</taxon>
        <taxon>Pseudomonadota</taxon>
        <taxon>Gammaproteobacteria</taxon>
        <taxon>Enterobacterales</taxon>
        <taxon>Yersiniaceae</taxon>
        <taxon>Yersinia</taxon>
    </lineage>
</organism>
<sequence length="79" mass="9285">MSFEVFEKLEVKVQQAIDTITLLQMEIEELKEKNNTLTQEVQDAAGSREALVRENEQLKQEQHVWQDRLRALLGKMEEV</sequence>
<evidence type="ECO:0000255" key="1">
    <source>
        <dbReference type="HAMAP-Rule" id="MF_01196"/>
    </source>
</evidence>
<protein>
    <recommendedName>
        <fullName evidence="1">Cell division protein ZapB</fullName>
    </recommendedName>
</protein>
<accession>Q1C2B1</accession>
<dbReference type="EMBL" id="CP000308">
    <property type="protein sequence ID" value="ABG15411.1"/>
    <property type="molecule type" value="Genomic_DNA"/>
</dbReference>
<dbReference type="RefSeq" id="WP_002208953.1">
    <property type="nucleotide sequence ID" value="NZ_CP009906.1"/>
</dbReference>
<dbReference type="SMR" id="Q1C2B1"/>
<dbReference type="GeneID" id="96663567"/>
<dbReference type="KEGG" id="ypa:YPA_3449"/>
<dbReference type="Proteomes" id="UP000001971">
    <property type="component" value="Chromosome"/>
</dbReference>
<dbReference type="GO" id="GO:0005737">
    <property type="term" value="C:cytoplasm"/>
    <property type="evidence" value="ECO:0007669"/>
    <property type="project" value="UniProtKB-SubCell"/>
</dbReference>
<dbReference type="GO" id="GO:0000917">
    <property type="term" value="P:division septum assembly"/>
    <property type="evidence" value="ECO:0007669"/>
    <property type="project" value="UniProtKB-KW"/>
</dbReference>
<dbReference type="GO" id="GO:0043093">
    <property type="term" value="P:FtsZ-dependent cytokinesis"/>
    <property type="evidence" value="ECO:0007669"/>
    <property type="project" value="UniProtKB-UniRule"/>
</dbReference>
<dbReference type="Gene3D" id="1.20.5.340">
    <property type="match status" value="1"/>
</dbReference>
<dbReference type="HAMAP" id="MF_01196">
    <property type="entry name" value="ZapB"/>
    <property type="match status" value="1"/>
</dbReference>
<dbReference type="InterPro" id="IPR009252">
    <property type="entry name" value="Cell_div_ZapB"/>
</dbReference>
<dbReference type="NCBIfam" id="NF011951">
    <property type="entry name" value="PRK15422.1"/>
    <property type="match status" value="1"/>
</dbReference>
<dbReference type="Pfam" id="PF06005">
    <property type="entry name" value="ZapB"/>
    <property type="match status" value="1"/>
</dbReference>
<proteinExistence type="inferred from homology"/>
<feature type="chain" id="PRO_0000333947" description="Cell division protein ZapB">
    <location>
        <begin position="1"/>
        <end position="79"/>
    </location>
</feature>
<feature type="coiled-coil region" evidence="1">
    <location>
        <begin position="6"/>
        <end position="78"/>
    </location>
</feature>
<comment type="function">
    <text evidence="1">Non-essential, abundant cell division factor that is required for proper Z-ring formation. It is recruited early to the divisome by direct interaction with FtsZ, stimulating Z-ring assembly and thereby promoting cell division earlier in the cell cycle. Its recruitment to the Z-ring requires functional FtsA or ZipA.</text>
</comment>
<comment type="subunit">
    <text evidence="1">Homodimer. The ends of the coiled-coil dimer bind to each other, forming polymers. Interacts with FtsZ.</text>
</comment>
<comment type="subcellular location">
    <subcellularLocation>
        <location>Cytoplasm</location>
    </subcellularLocation>
    <text evidence="1">Localizes to the septum at mid-cell, in a FtsZ-like pattern.</text>
</comment>
<comment type="similarity">
    <text evidence="1">Belongs to the ZapB family.</text>
</comment>